<sequence length="1783" mass="179841">MNLATRRRVRRTSRLVAKRALLLCILLYCTSFGFTQVLFEDVDVLQRLALRAELGSRAVPAGVISLRSGVILTTRARVTTPTRSLFPPELFWNCTIILSVRSHRLNSAFLFSVLSGNRIQLGLEISPGKLTLHAGPGNAATFLYNLHDGRWHHLAFVINGRSVTLHSPCSESDSGVTQELPVLPERLNPRGTFRLGGSSALLPGVVPFEGAVCQFDVVPSAQAQQNICSAIRRQCRENDTYRPAPPALLPLPSRHAPPLLAHTLPPNRTFTFTPTNFLLAPVNGAGGSSSVRMSDGVRPKPSSTTPPPLALMQTGIDAPLSLSLVTHKPSLRTPKPTASKPGVWLTPTKPARPKPTPGKASPKLNVSKSFGPKPTARLAASKLGSKAIGPKPTPLKPSKPVKKPTSVPKPNPTKNASIGPRPTNSNKKQNAILKPLPAPKPTVPKRPSPTNKKPLQPKNKSHTTPLTPKSTLAPNSTSKKPLPTLKSTSFTTAAPNKPPKTLETPKVNPDKSKTPVPYSTPRTPRFSIQSVTLPAFDDFQSFEVEPTRFSLLVGAPGLKGDQGESGLPGPPGKPGQPGMRGPRGPPGPHGKPGRPGPTGLKGKKGDPGLSPGKAPKGDKGDVGLPGPVGLVGVEGRKGQKGHPGPPGLPGEPGEQGPVGEAGAKGYPGRQGLPGPIGPVGPKGARGFIGIPGLFGLPGADGERGSPGPPGKRGKMGRPGFPGDFGERGPPGLDGEPGVIGAPGPPGVLGLIGDMGPAGTVGVPGLNGLKGVPGNMGESGLKGDKGDVGLPGEQGEIGFQGDKGVQGLPGLPGPRGKPGPQGKTGEIGPSGLPGPPGPEGFPGDIGKPGLNGPEGPKGKPGARGLPGPRGAAGREGDEGPLGPPGPFGLEGQMGSKGFPGALGLEGVKGEQGVTGKAGPMGERGLVGFIGPGGEAGLAGEKGDRGEMGLPGPPGEKGSTGHPGTPGEGGPPGPPGSPGSPGSRGPIGIRGPKGRRGPRGPDGVPGEIGTEGKKGPDGPPGKIGFPGHAGKIGESGEVGPKGFPGIQGPSGATGDKGIAGEPGPSGPPGTLGPQGNPGPKGPAGKVGDSGLPGEPGEKGSIGLAGNAGAAGLIGARGEPGLEGEAGPAGPDGTKGEKGDMGTEGEQGVRGDPGIKGKDGPPGDPGLTGVRGPEGKSGKSGERGKPGLKGAKGNIGHLGETGSVGKIGPIGTTGPKGSRGTIGHAGAPGRMGLQGDPGISGYEGHKGPQGPIGPPGPKGAKGEQGDDGKVEGPTGAPGLRGPVGKRGDRGEPGDPGYVGQQGVDGLRGKPGAPGLPGDPGPRGTQGPKGSKGEQGQKGKQGQQGERGSRGSPGVVGLPGPRGTVGREGREGFPGTDGLAGKDGSRGTPGDQGDDGEFGLPGKPGAPGKVGVIGLPGPQGSFGPKGERGLPGHPGPSGKRGFKGGMGLPGPQGDRGSKGQPGDIGEPGFPGMLGMFGPKGPPGDFGPKGIQGPKGPQGNMGRGGLAGPVGVIGPIGNPGSRGDTGNKGELGVQGPRGAPGPRGPPGLPGPPGIPLAMNQDFGLGVVQPVFRETHTQKIEGRGLLDMPMLDQAPEILRTLDYLSSLVHSLKNPLGTRDHPARLCRDLHDCRDTLYDGTYWIDPNLGCSSDSIEVMCNFSSGGRTCLRPITTAKLEFSVGRVQMNFLHLLSAGAEQRITIHCLNVTIWSHAPNQPPSQNAVQFHSWIGEVLEPDVLEDTCWQLNGRWQHADFLFRVLDPALLPVVRISNLPKVMPSSRFHLEVGPVCFL</sequence>
<evidence type="ECO:0000250" key="1"/>
<evidence type="ECO:0000250" key="2">
    <source>
        <dbReference type="UniProtKB" id="Q5QNQ9"/>
    </source>
</evidence>
<evidence type="ECO:0000250" key="3">
    <source>
        <dbReference type="UniProtKB" id="Q8IZC6"/>
    </source>
</evidence>
<evidence type="ECO:0000255" key="4"/>
<evidence type="ECO:0000255" key="5">
    <source>
        <dbReference type="PROSITE-ProRule" id="PRU00793"/>
    </source>
</evidence>
<evidence type="ECO:0000256" key="6">
    <source>
        <dbReference type="SAM" id="MobiDB-lite"/>
    </source>
</evidence>
<evidence type="ECO:0000269" key="7">
    <source>
    </source>
</evidence>
<evidence type="ECO:0000303" key="8">
    <source>
    </source>
</evidence>
<evidence type="ECO:0000305" key="9"/>
<evidence type="ECO:0000312" key="10">
    <source>
        <dbReference type="EMBL" id="ACT31326.1"/>
    </source>
</evidence>
<feature type="signal peptide" evidence="4">
    <location>
        <begin position="1"/>
        <end position="35"/>
    </location>
</feature>
<feature type="propeptide" id="PRO_0000397218" description="N-terminal propeptide" evidence="4">
    <location>
        <begin position="36"/>
        <end status="unknown"/>
    </location>
</feature>
<feature type="chain" id="PRO_0000397219" description="Collagen alpha-1(XXVII) chain A" evidence="7">
    <location>
        <begin status="unknown"/>
        <end position="1550"/>
    </location>
</feature>
<feature type="propeptide" id="PRO_0000397220" description="C-terminal propeptide" evidence="4">
    <location>
        <begin position="1551"/>
        <end position="1783"/>
    </location>
</feature>
<feature type="domain" description="Laminin G-like" evidence="4">
    <location>
        <begin position="73"/>
        <end position="235"/>
    </location>
</feature>
<feature type="domain" description="Collagen-like 1" evidence="4">
    <location>
        <begin position="554"/>
        <end position="608"/>
    </location>
</feature>
<feature type="domain" description="Collagen-like 2" evidence="4">
    <location>
        <begin position="818"/>
        <end position="873"/>
    </location>
</feature>
<feature type="domain" description="Collagen-like 3" evidence="4">
    <location>
        <begin position="845"/>
        <end position="902"/>
    </location>
</feature>
<feature type="domain" description="Collagen-like 4" evidence="4">
    <location>
        <begin position="986"/>
        <end position="1043"/>
    </location>
</feature>
<feature type="domain" description="Collagen-like 5" evidence="4">
    <location>
        <begin position="1269"/>
        <end position="1326"/>
    </location>
</feature>
<feature type="domain" description="Collagen-like 6" evidence="4">
    <location>
        <begin position="1446"/>
        <end position="1503"/>
    </location>
</feature>
<feature type="domain" description="Collagen-like 7" evidence="4">
    <location>
        <begin position="1497"/>
        <end position="1549"/>
    </location>
</feature>
<feature type="domain" description="Fibrillar collagen NC1" evidence="5">
    <location>
        <begin position="1589"/>
        <end position="1783"/>
    </location>
</feature>
<feature type="region of interest" description="Disordered" evidence="6">
    <location>
        <begin position="288"/>
        <end position="312"/>
    </location>
</feature>
<feature type="region of interest" description="Disordered" evidence="6">
    <location>
        <begin position="327"/>
        <end position="524"/>
    </location>
</feature>
<feature type="region of interest" description="Triple-helical region" evidence="4">
    <location>
        <begin position="553"/>
        <end position="1547"/>
    </location>
</feature>
<feature type="region of interest" description="Disordered" evidence="6">
    <location>
        <begin position="553"/>
        <end position="744"/>
    </location>
</feature>
<feature type="region of interest" description="Disordered" evidence="6">
    <location>
        <begin position="772"/>
        <end position="1461"/>
    </location>
</feature>
<feature type="region of interest" description="Disordered" evidence="6">
    <location>
        <begin position="1512"/>
        <end position="1546"/>
    </location>
</feature>
<feature type="compositionally biased region" description="Low complexity" evidence="6">
    <location>
        <begin position="403"/>
        <end position="415"/>
    </location>
</feature>
<feature type="compositionally biased region" description="Pro residues" evidence="6">
    <location>
        <begin position="436"/>
        <end position="447"/>
    </location>
</feature>
<feature type="compositionally biased region" description="Polar residues" evidence="6">
    <location>
        <begin position="462"/>
        <end position="494"/>
    </location>
</feature>
<feature type="compositionally biased region" description="Low complexity" evidence="6">
    <location>
        <begin position="622"/>
        <end position="633"/>
    </location>
</feature>
<feature type="compositionally biased region" description="Low complexity" evidence="6">
    <location>
        <begin position="651"/>
        <end position="661"/>
    </location>
</feature>
<feature type="compositionally biased region" description="Low complexity" evidence="6">
    <location>
        <begin position="735"/>
        <end position="744"/>
    </location>
</feature>
<feature type="compositionally biased region" description="Low complexity" evidence="6">
    <location>
        <begin position="817"/>
        <end position="829"/>
    </location>
</feature>
<feature type="compositionally biased region" description="Low complexity" evidence="6">
    <location>
        <begin position="861"/>
        <end position="870"/>
    </location>
</feature>
<feature type="compositionally biased region" description="Gly residues" evidence="6">
    <location>
        <begin position="926"/>
        <end position="935"/>
    </location>
</feature>
<feature type="compositionally biased region" description="Pro residues" evidence="6">
    <location>
        <begin position="967"/>
        <end position="976"/>
    </location>
</feature>
<feature type="compositionally biased region" description="Low complexity" evidence="6">
    <location>
        <begin position="978"/>
        <end position="988"/>
    </location>
</feature>
<feature type="compositionally biased region" description="Low complexity" evidence="6">
    <location>
        <begin position="1098"/>
        <end position="1129"/>
    </location>
</feature>
<feature type="compositionally biased region" description="Basic and acidic residues" evidence="6">
    <location>
        <begin position="1131"/>
        <end position="1158"/>
    </location>
</feature>
<feature type="compositionally biased region" description="Basic and acidic residues" evidence="6">
    <location>
        <begin position="1170"/>
        <end position="1182"/>
    </location>
</feature>
<feature type="compositionally biased region" description="Basic and acidic residues" evidence="6">
    <location>
        <begin position="1257"/>
        <end position="1267"/>
    </location>
</feature>
<feature type="compositionally biased region" description="Low complexity" evidence="6">
    <location>
        <begin position="1334"/>
        <end position="1349"/>
    </location>
</feature>
<feature type="compositionally biased region" description="Low complexity" evidence="6">
    <location>
        <begin position="1396"/>
        <end position="1409"/>
    </location>
</feature>
<feature type="compositionally biased region" description="Pro residues" evidence="6">
    <location>
        <begin position="1537"/>
        <end position="1546"/>
    </location>
</feature>
<feature type="binding site" evidence="1">
    <location>
        <position position="1637"/>
    </location>
    <ligand>
        <name>Ca(2+)</name>
        <dbReference type="ChEBI" id="CHEBI:29108"/>
    </ligand>
</feature>
<feature type="binding site" evidence="1">
    <location>
        <position position="1639"/>
    </location>
    <ligand>
        <name>Ca(2+)</name>
        <dbReference type="ChEBI" id="CHEBI:29108"/>
    </ligand>
</feature>
<feature type="binding site" evidence="1">
    <location>
        <position position="1642"/>
    </location>
    <ligand>
        <name>Ca(2+)</name>
        <dbReference type="ChEBI" id="CHEBI:29108"/>
    </ligand>
</feature>
<feature type="binding site" evidence="1">
    <location>
        <position position="1645"/>
    </location>
    <ligand>
        <name>Ca(2+)</name>
        <dbReference type="ChEBI" id="CHEBI:29108"/>
    </ligand>
</feature>
<feature type="glycosylation site" description="N-linked (GlcNAc...) asparagine" evidence="4">
    <location>
        <position position="1698"/>
    </location>
</feature>
<feature type="disulfide bond" evidence="5">
    <location>
        <begin position="1619"/>
        <end position="1651"/>
    </location>
</feature>
<feature type="disulfide bond" description="Interchain (with C-1285)" evidence="5">
    <location>
        <position position="1625"/>
    </location>
</feature>
<feature type="disulfide bond" description="Interchain (with C-1268)" evidence="5">
    <location>
        <position position="1642"/>
    </location>
</feature>
<feature type="disulfide bond" evidence="5">
    <location>
        <begin position="1660"/>
        <end position="1781"/>
    </location>
</feature>
<feature type="disulfide bond" evidence="5">
    <location>
        <begin position="1696"/>
        <end position="1734"/>
    </location>
</feature>
<dbReference type="EMBL" id="GQ229459">
    <property type="protein sequence ID" value="ACT31326.1"/>
    <property type="molecule type" value="mRNA"/>
</dbReference>
<dbReference type="RefSeq" id="NP_001156766.1">
    <property type="nucleotide sequence ID" value="NM_001163294.1"/>
</dbReference>
<dbReference type="GlyCosmos" id="C7DZK3">
    <property type="glycosylation" value="1 site, No reported glycans"/>
</dbReference>
<dbReference type="PaxDb" id="7955-ENSDARP00000057303"/>
<dbReference type="GeneID" id="100004688"/>
<dbReference type="KEGG" id="dre:100004688"/>
<dbReference type="AGR" id="ZFIN:ZDB-GENE-100119-1"/>
<dbReference type="CTD" id="100004688"/>
<dbReference type="ZFIN" id="ZDB-GENE-100119-1">
    <property type="gene designation" value="col27a1a"/>
</dbReference>
<dbReference type="eggNOG" id="KOG3544">
    <property type="taxonomic scope" value="Eukaryota"/>
</dbReference>
<dbReference type="InParanoid" id="C7DZK3"/>
<dbReference type="OrthoDB" id="8939548at2759"/>
<dbReference type="PhylomeDB" id="C7DZK3"/>
<dbReference type="PRO" id="PR:C7DZK3"/>
<dbReference type="Proteomes" id="UP000000437">
    <property type="component" value="Chromosome 16"/>
</dbReference>
<dbReference type="GO" id="GO:0005581">
    <property type="term" value="C:collagen trimer"/>
    <property type="evidence" value="ECO:0000318"/>
    <property type="project" value="GO_Central"/>
</dbReference>
<dbReference type="GO" id="GO:0062023">
    <property type="term" value="C:collagen-containing extracellular matrix"/>
    <property type="evidence" value="ECO:0000318"/>
    <property type="project" value="GO_Central"/>
</dbReference>
<dbReference type="GO" id="GO:0005615">
    <property type="term" value="C:extracellular space"/>
    <property type="evidence" value="ECO:0000318"/>
    <property type="project" value="GO_Central"/>
</dbReference>
<dbReference type="GO" id="GO:0030020">
    <property type="term" value="F:extracellular matrix structural constituent conferring tensile strength"/>
    <property type="evidence" value="ECO:0000318"/>
    <property type="project" value="GO_Central"/>
</dbReference>
<dbReference type="GO" id="GO:0046872">
    <property type="term" value="F:metal ion binding"/>
    <property type="evidence" value="ECO:0007669"/>
    <property type="project" value="UniProtKB-KW"/>
</dbReference>
<dbReference type="GO" id="GO:0030282">
    <property type="term" value="P:bone mineralization"/>
    <property type="evidence" value="ECO:0000315"/>
    <property type="project" value="ZFIN"/>
</dbReference>
<dbReference type="GO" id="GO:0048570">
    <property type="term" value="P:notochord morphogenesis"/>
    <property type="evidence" value="ECO:0000315"/>
    <property type="project" value="ZFIN"/>
</dbReference>
<dbReference type="GO" id="GO:0001501">
    <property type="term" value="P:skeletal system development"/>
    <property type="evidence" value="ECO:0000315"/>
    <property type="project" value="ZFIN"/>
</dbReference>
<dbReference type="CDD" id="cd00110">
    <property type="entry name" value="LamG"/>
    <property type="match status" value="1"/>
</dbReference>
<dbReference type="Gene3D" id="2.60.120.1000">
    <property type="match status" value="2"/>
</dbReference>
<dbReference type="Gene3D" id="2.60.120.200">
    <property type="match status" value="1"/>
</dbReference>
<dbReference type="InterPro" id="IPR008160">
    <property type="entry name" value="Collagen"/>
</dbReference>
<dbReference type="InterPro" id="IPR050938">
    <property type="entry name" value="Collagen_Structural_Proteins"/>
</dbReference>
<dbReference type="InterPro" id="IPR013320">
    <property type="entry name" value="ConA-like_dom_sf"/>
</dbReference>
<dbReference type="InterPro" id="IPR000885">
    <property type="entry name" value="Fib_collagen_C"/>
</dbReference>
<dbReference type="InterPro" id="IPR001791">
    <property type="entry name" value="Laminin_G"/>
</dbReference>
<dbReference type="InterPro" id="IPR048287">
    <property type="entry name" value="TSPN-like_N"/>
</dbReference>
<dbReference type="PANTHER" id="PTHR37456:SF6">
    <property type="entry name" value="COLLAGEN ALPHA-1(XXIII) CHAIN-LIKE ISOFORM X2"/>
    <property type="match status" value="1"/>
</dbReference>
<dbReference type="PANTHER" id="PTHR37456">
    <property type="entry name" value="SI:CH211-266K2.1"/>
    <property type="match status" value="1"/>
</dbReference>
<dbReference type="Pfam" id="PF01410">
    <property type="entry name" value="COLFI"/>
    <property type="match status" value="2"/>
</dbReference>
<dbReference type="Pfam" id="PF01391">
    <property type="entry name" value="Collagen"/>
    <property type="match status" value="6"/>
</dbReference>
<dbReference type="SMART" id="SM00038">
    <property type="entry name" value="COLFI"/>
    <property type="match status" value="1"/>
</dbReference>
<dbReference type="SMART" id="SM00210">
    <property type="entry name" value="TSPN"/>
    <property type="match status" value="1"/>
</dbReference>
<dbReference type="SUPFAM" id="SSF49899">
    <property type="entry name" value="Concanavalin A-like lectins/glucanases"/>
    <property type="match status" value="1"/>
</dbReference>
<dbReference type="PROSITE" id="PS51461">
    <property type="entry name" value="NC1_FIB"/>
    <property type="match status" value="1"/>
</dbReference>
<keyword id="KW-0106">Calcium</keyword>
<keyword id="KW-0176">Collagen</keyword>
<keyword id="KW-0217">Developmental protein</keyword>
<keyword id="KW-1015">Disulfide bond</keyword>
<keyword id="KW-0272">Extracellular matrix</keyword>
<keyword id="KW-0325">Glycoprotein</keyword>
<keyword id="KW-0479">Metal-binding</keyword>
<keyword id="KW-1185">Reference proteome</keyword>
<keyword id="KW-0677">Repeat</keyword>
<keyword id="KW-0964">Secreted</keyword>
<keyword id="KW-0732">Signal</keyword>
<name>CRA1A_DANRE</name>
<reference evidence="9 10" key="1">
    <citation type="journal article" date="2009" name="PLoS ONE">
        <title>Critical early roles for col27a1a and col27a1b in zebrafish notochord morphogenesis, vertebral mineralization and post-embryonic axial growth.</title>
        <authorList>
            <person name="Christiansen H.E."/>
            <person name="Lang M.R."/>
            <person name="Pace J.M."/>
            <person name="Parichy D.M."/>
        </authorList>
    </citation>
    <scope>NUCLEOTIDE SEQUENCE [MRNA]</scope>
    <scope>FUNCTION</scope>
    <scope>TISSUE SPECIFICITY</scope>
</reference>
<protein>
    <recommendedName>
        <fullName evidence="3 8">Collagen alpha-1(XXVII) chain A</fullName>
    </recommendedName>
</protein>
<comment type="function">
    <text evidence="3 7">May play a role during the calcification of cartilage and the transition of cartilage to bone (By similarity). Together with col27a1b, plays a role in development of the notochord and axial skeleton.</text>
</comment>
<comment type="subcellular location">
    <subcellularLocation>
        <location evidence="2 5">Secreted</location>
        <location evidence="2 5">Extracellular space</location>
        <location evidence="2 5">Extracellular matrix</location>
    </subcellularLocation>
</comment>
<comment type="tissue specificity">
    <text evidence="7">Expressed dynamically in the notochord from late epiboly, spreading to the anterior notochord by 24 hpf, and then throughout the notochord by 30 hpf. Subsequently, notochordal expression becomes restricted to the distal tip of the tail by 48 hpf and is no longer detectable by 72 hpf. Also expressed throughout the floor plate and hypochord at 24 hpf, and in forming head cartilages and the first forming tooth.</text>
</comment>
<comment type="domain">
    <text evidence="1">The C-terminal propeptide, also known as COLFI domain, have crucial roles in tissue growth and repair by controlling both the intracellular assembly of procollagen molecules and the extracellular assembly of collagen fibrils. It binds a calcium ion which is essential for its function (By similarity).</text>
</comment>
<comment type="similarity">
    <text evidence="5">Belongs to the fibrillar collagen family.</text>
</comment>
<proteinExistence type="evidence at transcript level"/>
<gene>
    <name evidence="8 10" type="primary">col27a1a</name>
</gene>
<organism>
    <name type="scientific">Danio rerio</name>
    <name type="common">Zebrafish</name>
    <name type="synonym">Brachydanio rerio</name>
    <dbReference type="NCBI Taxonomy" id="7955"/>
    <lineage>
        <taxon>Eukaryota</taxon>
        <taxon>Metazoa</taxon>
        <taxon>Chordata</taxon>
        <taxon>Craniata</taxon>
        <taxon>Vertebrata</taxon>
        <taxon>Euteleostomi</taxon>
        <taxon>Actinopterygii</taxon>
        <taxon>Neopterygii</taxon>
        <taxon>Teleostei</taxon>
        <taxon>Ostariophysi</taxon>
        <taxon>Cypriniformes</taxon>
        <taxon>Danionidae</taxon>
        <taxon>Danioninae</taxon>
        <taxon>Danio</taxon>
    </lineage>
</organism>
<accession>C7DZK3</accession>